<reference key="1">
    <citation type="submission" date="2002-03" db="EMBL/GenBank/DDBJ databases">
        <authorList>
            <person name="Goetting C."/>
        </authorList>
    </citation>
    <scope>NUCLEOTIDE SEQUENCE [MRNA]</scope>
</reference>
<reference key="2">
    <citation type="journal article" date="2009" name="PLoS Biol.">
        <title>Lineage-specific biology revealed by a finished genome assembly of the mouse.</title>
        <authorList>
            <person name="Church D.M."/>
            <person name="Goodstadt L."/>
            <person name="Hillier L.W."/>
            <person name="Zody M.C."/>
            <person name="Goldstein S."/>
            <person name="She X."/>
            <person name="Bult C.J."/>
            <person name="Agarwala R."/>
            <person name="Cherry J.L."/>
            <person name="DiCuccio M."/>
            <person name="Hlavina W."/>
            <person name="Kapustin Y."/>
            <person name="Meric P."/>
            <person name="Maglott D."/>
            <person name="Birtle Z."/>
            <person name="Marques A.C."/>
            <person name="Graves T."/>
            <person name="Zhou S."/>
            <person name="Teague B."/>
            <person name="Potamousis K."/>
            <person name="Churas C."/>
            <person name="Place M."/>
            <person name="Herschleb J."/>
            <person name="Runnheim R."/>
            <person name="Forrest D."/>
            <person name="Amos-Landgraf J."/>
            <person name="Schwartz D.C."/>
            <person name="Cheng Z."/>
            <person name="Lindblad-Toh K."/>
            <person name="Eichler E.E."/>
            <person name="Ponting C.P."/>
        </authorList>
    </citation>
    <scope>NUCLEOTIDE SEQUENCE [LARGE SCALE GENOMIC DNA]</scope>
    <source>
        <strain>C57BL/6J</strain>
    </source>
</reference>
<reference key="3">
    <citation type="journal article" date="2004" name="Genome Res.">
        <title>The status, quality, and expansion of the NIH full-length cDNA project: the Mammalian Gene Collection (MGC).</title>
        <authorList>
            <consortium name="The MGC Project Team"/>
        </authorList>
    </citation>
    <scope>NUCLEOTIDE SEQUENCE [LARGE SCALE MRNA] OF 133-865</scope>
    <source>
        <strain>FVB/N</strain>
        <tissue>Kidney</tissue>
    </source>
</reference>
<reference key="4">
    <citation type="journal article" date="2007" name="J. Biol. Chem.">
        <title>Human xylosyltransferase II is involved in the biosynthesis of the uniform tetrasaccharide linkage region in chondroitin sulfate and heparan sulfate proteoglycans.</title>
        <authorList>
            <person name="Poenighaus C."/>
            <person name="Ambrosius M."/>
            <person name="Casanova J.C."/>
            <person name="Prante C."/>
            <person name="Kuhn J."/>
            <person name="Esko J.D."/>
            <person name="Kleesiek K."/>
            <person name="Goetting C."/>
        </authorList>
    </citation>
    <scope>TISSUE SPECIFICITY</scope>
</reference>
<reference key="5">
    <citation type="journal article" date="2007" name="Proc. Natl. Acad. Sci. U.S.A.">
        <title>Polycystic disease caused by deficiency in xylosyltransferase 2, an initiating enzyme of glycosaminoglycan biosynthesis.</title>
        <authorList>
            <person name="Condac E."/>
            <person name="Silasi-Mansat R."/>
            <person name="Kosanke S."/>
            <person name="Schoeb T."/>
            <person name="Towner R."/>
            <person name="Lupu F."/>
            <person name="Cummings R.D."/>
            <person name="Hinsdale M.E."/>
        </authorList>
    </citation>
    <scope>FUNCTION</scope>
    <scope>DISRUPTION PHENOTYPE</scope>
    <scope>TISSUE SPECIFICITY</scope>
</reference>
<dbReference type="EC" id="2.4.2.26"/>
<dbReference type="EMBL" id="AJ291751">
    <property type="protein sequence ID" value="CAC18567.2"/>
    <property type="molecule type" value="mRNA"/>
</dbReference>
<dbReference type="EMBL" id="AL645764">
    <property type="status" value="NOT_ANNOTATED_CDS"/>
    <property type="molecule type" value="Genomic_DNA"/>
</dbReference>
<dbReference type="EMBL" id="BC034082">
    <property type="protein sequence ID" value="AAH34082.1"/>
    <property type="status" value="ALT_INIT"/>
    <property type="molecule type" value="mRNA"/>
</dbReference>
<dbReference type="CCDS" id="CCDS48888.1"/>
<dbReference type="RefSeq" id="NP_665827.2">
    <property type="nucleotide sequence ID" value="NM_145828.3"/>
</dbReference>
<dbReference type="SMR" id="Q9EPL0"/>
<dbReference type="BioGRID" id="229845">
    <property type="interactions" value="2"/>
</dbReference>
<dbReference type="FunCoup" id="Q9EPL0">
    <property type="interactions" value="664"/>
</dbReference>
<dbReference type="IntAct" id="Q9EPL0">
    <property type="interactions" value="1"/>
</dbReference>
<dbReference type="STRING" id="10090.ENSMUSP00000112052"/>
<dbReference type="CAZy" id="GT14">
    <property type="family name" value="Glycosyltransferase Family 14"/>
</dbReference>
<dbReference type="GlyCosmos" id="Q9EPL0">
    <property type="glycosylation" value="3 sites, No reported glycans"/>
</dbReference>
<dbReference type="GlyGen" id="Q9EPL0">
    <property type="glycosylation" value="5 sites"/>
</dbReference>
<dbReference type="iPTMnet" id="Q9EPL0"/>
<dbReference type="PhosphoSitePlus" id="Q9EPL0"/>
<dbReference type="PaxDb" id="10090-ENSMUSP00000112052"/>
<dbReference type="ProteomicsDB" id="299803"/>
<dbReference type="Pumba" id="Q9EPL0"/>
<dbReference type="Antibodypedia" id="2239">
    <property type="antibodies" value="100 antibodies from 15 providers"/>
</dbReference>
<dbReference type="DNASU" id="217119"/>
<dbReference type="Ensembl" id="ENSMUST00000116349.9">
    <property type="protein sequence ID" value="ENSMUSP00000112052.3"/>
    <property type="gene ID" value="ENSMUSG00000020868.16"/>
</dbReference>
<dbReference type="GeneID" id="217119"/>
<dbReference type="KEGG" id="mmu:217119"/>
<dbReference type="UCSC" id="uc007kzi.2">
    <property type="organism name" value="mouse"/>
</dbReference>
<dbReference type="AGR" id="MGI:2444797"/>
<dbReference type="CTD" id="64132"/>
<dbReference type="MGI" id="MGI:2444797">
    <property type="gene designation" value="Xylt2"/>
</dbReference>
<dbReference type="VEuPathDB" id="HostDB:ENSMUSG00000020868"/>
<dbReference type="eggNOG" id="KOG0799">
    <property type="taxonomic scope" value="Eukaryota"/>
</dbReference>
<dbReference type="GeneTree" id="ENSGT00940000158326"/>
<dbReference type="HOGENOM" id="CLU_012840_0_0_1"/>
<dbReference type="InParanoid" id="Q9EPL0"/>
<dbReference type="OMA" id="WENAHDI"/>
<dbReference type="OrthoDB" id="2019572at2759"/>
<dbReference type="PhylomeDB" id="Q9EPL0"/>
<dbReference type="TreeFam" id="TF315534"/>
<dbReference type="Reactome" id="R-MMU-1971475">
    <property type="pathway name" value="A tetrasaccharide linker sequence is required for GAG synthesis"/>
</dbReference>
<dbReference type="UniPathway" id="UPA00755"/>
<dbReference type="UniPathway" id="UPA00756"/>
<dbReference type="BioGRID-ORCS" id="217119">
    <property type="hits" value="12 hits in 77 CRISPR screens"/>
</dbReference>
<dbReference type="ChiTaRS" id="Xylt2">
    <property type="organism name" value="mouse"/>
</dbReference>
<dbReference type="PRO" id="PR:Q9EPL0"/>
<dbReference type="Proteomes" id="UP000000589">
    <property type="component" value="Chromosome 11"/>
</dbReference>
<dbReference type="RNAct" id="Q9EPL0">
    <property type="molecule type" value="protein"/>
</dbReference>
<dbReference type="Bgee" id="ENSMUSG00000020868">
    <property type="expression patterns" value="Expressed in ectoplacental cone and 94 other cell types or tissues"/>
</dbReference>
<dbReference type="ExpressionAtlas" id="Q9EPL0">
    <property type="expression patterns" value="baseline and differential"/>
</dbReference>
<dbReference type="GO" id="GO:0005615">
    <property type="term" value="C:extracellular space"/>
    <property type="evidence" value="ECO:0000250"/>
    <property type="project" value="UniProtKB"/>
</dbReference>
<dbReference type="GO" id="GO:0005794">
    <property type="term" value="C:Golgi apparatus"/>
    <property type="evidence" value="ECO:0000266"/>
    <property type="project" value="MGI"/>
</dbReference>
<dbReference type="GO" id="GO:0000139">
    <property type="term" value="C:Golgi membrane"/>
    <property type="evidence" value="ECO:0007669"/>
    <property type="project" value="UniProtKB-SubCell"/>
</dbReference>
<dbReference type="GO" id="GO:0000287">
    <property type="term" value="F:magnesium ion binding"/>
    <property type="evidence" value="ECO:0000250"/>
    <property type="project" value="UniProtKB"/>
</dbReference>
<dbReference type="GO" id="GO:0030145">
    <property type="term" value="F:manganese ion binding"/>
    <property type="evidence" value="ECO:0000250"/>
    <property type="project" value="UniProtKB"/>
</dbReference>
<dbReference type="GO" id="GO:0030158">
    <property type="term" value="F:protein xylosyltransferase activity"/>
    <property type="evidence" value="ECO:0000314"/>
    <property type="project" value="MGI"/>
</dbReference>
<dbReference type="GO" id="GO:0050650">
    <property type="term" value="P:chondroitin sulfate proteoglycan biosynthetic process"/>
    <property type="evidence" value="ECO:0000250"/>
    <property type="project" value="UniProtKB"/>
</dbReference>
<dbReference type="GO" id="GO:0006024">
    <property type="term" value="P:glycosaminoglycan biosynthetic process"/>
    <property type="evidence" value="ECO:0000315"/>
    <property type="project" value="MGI"/>
</dbReference>
<dbReference type="GO" id="GO:0015012">
    <property type="term" value="P:heparan sulfate proteoglycan biosynthetic process"/>
    <property type="evidence" value="ECO:0000250"/>
    <property type="project" value="UniProtKB"/>
</dbReference>
<dbReference type="GO" id="GO:0030210">
    <property type="term" value="P:heparin proteoglycan biosynthetic process"/>
    <property type="evidence" value="ECO:0000315"/>
    <property type="project" value="MGI"/>
</dbReference>
<dbReference type="GO" id="GO:0030166">
    <property type="term" value="P:proteoglycan biosynthetic process"/>
    <property type="evidence" value="ECO:0000315"/>
    <property type="project" value="MGI"/>
</dbReference>
<dbReference type="InterPro" id="IPR003406">
    <property type="entry name" value="Glyco_trans_14"/>
</dbReference>
<dbReference type="InterPro" id="IPR043538">
    <property type="entry name" value="XYLT"/>
</dbReference>
<dbReference type="InterPro" id="IPR024448">
    <property type="entry name" value="XylT_C"/>
</dbReference>
<dbReference type="PANTHER" id="PTHR46025:SF1">
    <property type="entry name" value="XYLOSYLTRANSFERASE 2"/>
    <property type="match status" value="1"/>
</dbReference>
<dbReference type="PANTHER" id="PTHR46025">
    <property type="entry name" value="XYLOSYLTRANSFERASE OXT"/>
    <property type="match status" value="1"/>
</dbReference>
<dbReference type="Pfam" id="PF02485">
    <property type="entry name" value="Branch"/>
    <property type="match status" value="1"/>
</dbReference>
<dbReference type="Pfam" id="PF12529">
    <property type="entry name" value="Xylo_C"/>
    <property type="match status" value="1"/>
</dbReference>
<evidence type="ECO:0000250" key="1">
    <source>
        <dbReference type="UniProtKB" id="Q86Y38"/>
    </source>
</evidence>
<evidence type="ECO:0000250" key="2">
    <source>
        <dbReference type="UniProtKB" id="Q9H1B5"/>
    </source>
</evidence>
<evidence type="ECO:0000255" key="3"/>
<evidence type="ECO:0000256" key="4">
    <source>
        <dbReference type="SAM" id="MobiDB-lite"/>
    </source>
</evidence>
<evidence type="ECO:0000269" key="5">
    <source>
    </source>
</evidence>
<evidence type="ECO:0000269" key="6">
    <source>
    </source>
</evidence>
<evidence type="ECO:0000305" key="7"/>
<accession>Q9EPL0</accession>
<accession>Q5SUY1</accession>
<accession>Q8K060</accession>
<name>XYLT2_MOUSE</name>
<comment type="function">
    <text evidence="2 6">Catalyzes the first step in the biosynthesis of chondroitin sulfate, heparan sulfate and dermatan sulfate proteoglycans, such as DCN (PubMed:17517600). Transfers D-xylose from UDP-D-xylose to specific serine residues of the core protein (By similarity).</text>
</comment>
<comment type="catalytic activity">
    <reaction evidence="2">
        <text>UDP-alpha-D-xylose + L-seryl-[protein] = 3-O-(beta-D-xylosyl)-L-seryl-[protein] + UDP + H(+)</text>
        <dbReference type="Rhea" id="RHEA:50192"/>
        <dbReference type="Rhea" id="RHEA-COMP:9863"/>
        <dbReference type="Rhea" id="RHEA-COMP:12567"/>
        <dbReference type="ChEBI" id="CHEBI:15378"/>
        <dbReference type="ChEBI" id="CHEBI:29999"/>
        <dbReference type="ChEBI" id="CHEBI:57632"/>
        <dbReference type="ChEBI" id="CHEBI:58223"/>
        <dbReference type="ChEBI" id="CHEBI:132085"/>
        <dbReference type="EC" id="2.4.2.26"/>
    </reaction>
</comment>
<comment type="cofactor">
    <cofactor evidence="2">
        <name>Mg(2+)</name>
        <dbReference type="ChEBI" id="CHEBI:18420"/>
    </cofactor>
    <cofactor evidence="2">
        <name>Mn(2+)</name>
        <dbReference type="ChEBI" id="CHEBI:29035"/>
    </cofactor>
    <text evidence="2">Active with either Mg(2+) or Mn(2+), but activity is highest when both are present.</text>
</comment>
<comment type="pathway">
    <text evidence="2">Glycan metabolism; chondroitin sulfate biosynthesis.</text>
</comment>
<comment type="pathway">
    <text evidence="2">Glycan metabolism; heparan sulfate biosynthesis.</text>
</comment>
<comment type="subunit">
    <text evidence="1">Monomer.</text>
</comment>
<comment type="subcellular location">
    <subcellularLocation>
        <location evidence="2">Golgi apparatus membrane</location>
        <topology evidence="2">Single-pass type II membrane protein</topology>
    </subcellularLocation>
    <subcellularLocation>
        <location evidence="2">Secreted</location>
    </subcellularLocation>
</comment>
<comment type="tissue specificity">
    <text evidence="5">Detected in brain, liver, lung, kidney, heart, spleen and testis, and at lower levels in skeletal muscle.</text>
</comment>
<comment type="PTM">
    <text evidence="1">Contains disulfide bonds.</text>
</comment>
<comment type="disruption phenotype">
    <text evidence="6">Mutant mice are born at the expected Mendelian rate. Their livers display strongly reduced levels of heparan sulfate proteoglycan. DCN glycosylation is altered and lacks chondroitin sulfate groups. After 3 to 5 months, all mutant mice display increased liver weight. At an age of 4 to 5 months, about half of them delevop liver cysts, due to biliary epithelial cell hyperplasia. At an age of 3 and 10 months, mutant mice also display increased kidney weight due to hydronephrosis and impaired renal function, but they do not develop cysts.</text>
</comment>
<comment type="similarity">
    <text evidence="7">Belongs to the glycosyltransferase 14 family. XylT subfamily.</text>
</comment>
<comment type="sequence caution" evidence="7">
    <conflict type="erroneous initiation">
        <sequence resource="EMBL-CDS" id="AAH34082"/>
    </conflict>
</comment>
<gene>
    <name type="primary">Xylt2</name>
</gene>
<proteinExistence type="evidence at transcript level"/>
<keyword id="KW-1015">Disulfide bond</keyword>
<keyword id="KW-0325">Glycoprotein</keyword>
<keyword id="KW-0328">Glycosyltransferase</keyword>
<keyword id="KW-0333">Golgi apparatus</keyword>
<keyword id="KW-0460">Magnesium</keyword>
<keyword id="KW-0464">Manganese</keyword>
<keyword id="KW-0472">Membrane</keyword>
<keyword id="KW-0479">Metal-binding</keyword>
<keyword id="KW-1185">Reference proteome</keyword>
<keyword id="KW-0964">Secreted</keyword>
<keyword id="KW-0735">Signal-anchor</keyword>
<keyword id="KW-0808">Transferase</keyword>
<keyword id="KW-0812">Transmembrane</keyword>
<keyword id="KW-1133">Transmembrane helix</keyword>
<feature type="chain" id="PRO_0000191407" description="Xylosyltransferase 2">
    <location>
        <begin position="1"/>
        <end position="865"/>
    </location>
</feature>
<feature type="topological domain" description="Cytoplasmic" evidence="3">
    <location>
        <begin position="1"/>
        <end position="15"/>
    </location>
</feature>
<feature type="transmembrane region" description="Helical; Signal-anchor for type II membrane protein" evidence="3">
    <location>
        <begin position="16"/>
        <end position="36"/>
    </location>
</feature>
<feature type="topological domain" description="Lumenal" evidence="3">
    <location>
        <begin position="37"/>
        <end position="865"/>
    </location>
</feature>
<feature type="region of interest" description="Disordered" evidence="4">
    <location>
        <begin position="39"/>
        <end position="155"/>
    </location>
</feature>
<feature type="compositionally biased region" description="Basic and acidic residues" evidence="4">
    <location>
        <begin position="53"/>
        <end position="65"/>
    </location>
</feature>
<feature type="compositionally biased region" description="Basic residues" evidence="4">
    <location>
        <begin position="73"/>
        <end position="82"/>
    </location>
</feature>
<feature type="binding site" evidence="1">
    <location>
        <position position="239"/>
    </location>
    <ligand>
        <name>UDP-alpha-D-xylose</name>
        <dbReference type="ChEBI" id="CHEBI:57632"/>
    </ligand>
</feature>
<feature type="binding site" evidence="1">
    <location>
        <position position="267"/>
    </location>
    <ligand>
        <name>UDP-alpha-D-xylose</name>
        <dbReference type="ChEBI" id="CHEBI:57632"/>
    </ligand>
</feature>
<feature type="binding site" evidence="1">
    <location>
        <begin position="296"/>
        <end position="298"/>
    </location>
    <ligand>
        <name>UDP-alpha-D-xylose</name>
        <dbReference type="ChEBI" id="CHEBI:57632"/>
    </ligand>
</feature>
<feature type="binding site" evidence="1">
    <location>
        <begin position="400"/>
        <end position="401"/>
    </location>
    <ligand>
        <name>UDP-alpha-D-xylose</name>
        <dbReference type="ChEBI" id="CHEBI:57632"/>
    </ligand>
</feature>
<feature type="binding site" evidence="1">
    <location>
        <position position="481"/>
    </location>
    <ligand>
        <name>UDP-alpha-D-xylose</name>
        <dbReference type="ChEBI" id="CHEBI:57632"/>
    </ligand>
</feature>
<feature type="binding site" evidence="1">
    <location>
        <begin position="504"/>
        <end position="505"/>
    </location>
    <ligand>
        <name>UDP-alpha-D-xylose</name>
        <dbReference type="ChEBI" id="CHEBI:57632"/>
    </ligand>
</feature>
<feature type="glycosylation site" description="N-linked (GlcNAc...) asparagine" evidence="3">
    <location>
        <position position="122"/>
    </location>
</feature>
<feature type="glycosylation site" description="N-linked (GlcNAc...) asparagine" evidence="3">
    <location>
        <position position="327"/>
    </location>
</feature>
<feature type="glycosylation site" description="N-linked (GlcNAc...) asparagine" evidence="3">
    <location>
        <position position="683"/>
    </location>
</feature>
<feature type="disulfide bond" evidence="1">
    <location>
        <begin position="162"/>
        <end position="190"/>
    </location>
</feature>
<feature type="disulfide bond" evidence="1">
    <location>
        <begin position="206"/>
        <end position="448"/>
    </location>
</feature>
<feature type="disulfide bond" evidence="1">
    <location>
        <begin position="467"/>
        <end position="480"/>
    </location>
</feature>
<feature type="disulfide bond" evidence="1">
    <location>
        <begin position="469"/>
        <end position="478"/>
    </location>
</feature>
<feature type="disulfide bond" evidence="1">
    <location>
        <begin position="581"/>
        <end position="833"/>
    </location>
</feature>
<feature type="disulfide bond" evidence="1">
    <location>
        <begin position="826"/>
        <end position="839"/>
    </location>
</feature>
<feature type="sequence conflict" description="In Ref. 1; CAC18567." evidence="7" ref="1">
    <original>K</original>
    <variation>N</variation>
    <location>
        <position position="94"/>
    </location>
</feature>
<feature type="sequence conflict" description="In Ref. 1; CAC18567." evidence="7" ref="1">
    <original>N</original>
    <variation>K</variation>
    <location>
        <position position="460"/>
    </location>
</feature>
<feature type="sequence conflict" description="In Ref. 1; CAC18567." evidence="7" ref="1">
    <original>GC</original>
    <variation>AG</variation>
    <location>
        <begin position="466"/>
        <end position="467"/>
    </location>
</feature>
<feature type="sequence conflict" description="In Ref. 1; CAC18567." evidence="7" ref="1">
    <original>C</original>
    <variation>S</variation>
    <location>
        <position position="478"/>
    </location>
</feature>
<feature type="sequence conflict" description="In Ref. 1; CAC18567." evidence="7" ref="1">
    <original>N</original>
    <variation>K</variation>
    <location>
        <position position="483"/>
    </location>
</feature>
<feature type="sequence conflict" description="In Ref. 1; CAC18567." evidence="7" ref="1">
    <original>P</original>
    <variation>R</variation>
    <location>
        <position position="487"/>
    </location>
</feature>
<feature type="sequence conflict" description="In Ref. 1; CAC18567." evidence="7" ref="1">
    <original>RKF</original>
    <variation>GKL</variation>
    <location>
        <begin position="504"/>
        <end position="506"/>
    </location>
</feature>
<feature type="sequence conflict" description="In Ref. 1; CAC18567." evidence="7" ref="1">
    <original>L</original>
    <variation>V</variation>
    <location>
        <position position="515"/>
    </location>
</feature>
<feature type="sequence conflict" description="In Ref. 1; CAC18567." evidence="7" ref="1">
    <original>L</original>
    <variation>V</variation>
    <location>
        <position position="666"/>
    </location>
</feature>
<feature type="sequence conflict" description="In Ref. 1; CAC18567." evidence="7" ref="1">
    <original>P</original>
    <variation>A</variation>
    <location>
        <position position="672"/>
    </location>
</feature>
<feature type="sequence conflict" description="In Ref. 1; CAC18567." evidence="7" ref="1">
    <original>MQ</original>
    <variation>LR</variation>
    <location>
        <begin position="675"/>
        <end position="676"/>
    </location>
</feature>
<feature type="sequence conflict" description="In Ref. 1; CAC18567." evidence="7" ref="1">
    <original>T</original>
    <variation>R</variation>
    <location>
        <position position="685"/>
    </location>
</feature>
<feature type="sequence conflict" description="In Ref. 1; CAC18567." evidence="7" ref="1">
    <original>PPH</original>
    <variation>QPQ</variation>
    <location>
        <begin position="768"/>
        <end position="770"/>
    </location>
</feature>
<feature type="sequence conflict" description="In Ref. 1; CAC18567." evidence="7" ref="1">
    <original>G</original>
    <variation>V</variation>
    <location>
        <position position="780"/>
    </location>
</feature>
<feature type="sequence conflict" description="In Ref. 1; CAC18567." evidence="7" ref="1">
    <original>P</original>
    <variation>S</variation>
    <location>
        <position position="788"/>
    </location>
</feature>
<feature type="sequence conflict" description="In Ref. 1; CAC18567." evidence="7" ref="1">
    <original>R</original>
    <variation>Q</variation>
    <location>
        <position position="799"/>
    </location>
</feature>
<protein>
    <recommendedName>
        <fullName>Xylosyltransferase 2</fullName>
        <ecNumber>2.4.2.26</ecNumber>
    </recommendedName>
    <alternativeName>
        <fullName>Peptide O-xylosyltransferase 2</fullName>
    </alternativeName>
    <alternativeName>
        <fullName>Xylosyltransferase II</fullName>
    </alternativeName>
</protein>
<organism>
    <name type="scientific">Mus musculus</name>
    <name type="common">Mouse</name>
    <dbReference type="NCBI Taxonomy" id="10090"/>
    <lineage>
        <taxon>Eukaryota</taxon>
        <taxon>Metazoa</taxon>
        <taxon>Chordata</taxon>
        <taxon>Craniata</taxon>
        <taxon>Vertebrata</taxon>
        <taxon>Euteleostomi</taxon>
        <taxon>Mammalia</taxon>
        <taxon>Eutheria</taxon>
        <taxon>Euarchontoglires</taxon>
        <taxon>Glires</taxon>
        <taxon>Rodentia</taxon>
        <taxon>Myomorpha</taxon>
        <taxon>Muroidea</taxon>
        <taxon>Muridae</taxon>
        <taxon>Murinae</taxon>
        <taxon>Mus</taxon>
        <taxon>Mus</taxon>
    </lineage>
</organism>
<sequence>MVASARVQKLVRRYKLAIATALAILLLQGLVVWSFSGLEEDEPGEKGRQRKPRPLDPGEGSKDTDSSAGRRGSAGRRHGRWRGRAESPGVPVAKVVRAVTSRQRASRRVPPAPPPEAPGRQNLSGAAAGEALIGAPGFPQHGDTGSVEGAPQPTDNTFTPKCEIVGKDALSALARASTKQCQQEIANVVCLHQAGNLMPKSVPRHCQLAGKMSPGVQWEEIRAQQPVGGPPVRIAYMLVVHGRAIRQLKRLLKAVYHEQHFFYIHVDKRSNYLYREVVELAQHYENVRVTPWRMVTIWGGASLLRMYLRSMKDLLEIPGWTWDFFINLSATDYPTRTNEELVAFLSKNRDKNFLKSHGRDNSRFIKKQGLDRLFHECDSHMWRLGERQIPAGIVVDGGSDWFVLTRSFVEYVVYTDDPLVAQLRQFYTYTLLPAESFFHTVLENSPACASLVDNNLRVTNWNRKLGCKCQYKHIVDWCGCSPNDFKPQDFLRLQQVSRPTFFARKFESTVNQEVLEILDFHLYGSYPPSTPALKAYWENIYDVADGPGGLSDVLLTAYTAFARLSLRHAATAVSPLATAVCRFEPRGLPSSVHLYFYDDHFQGYLVTQAVQPSAQGPAETLEMWLMPQRSLKLLGHSDQASRLQSLEVGTEWDPKERLFRNFGGLLGPLDEPVAMQRWARGPNLTATVVWIDPTYVVATSYDITVDADTEVTQYKPPLSLPLRPGAWTVRLLQFWEPLGETRFLVLPLTFNRKLPLRKDDASWLHAGPPHNEYMEQSFQGLSGILNLPQAEALEEAARRHTELTGSALEAWTDGELSNFWSVAGLCAIGPSACPSLELCRLTSWSSLSPDPKSELGPVKADGRLR</sequence>